<comment type="function">
    <text evidence="1">Allows the formation of correctly charged Gln-tRNA(Gln) through the transamidation of misacylated Glu-tRNA(Gln) in the mitochondria. The reaction takes place in the presence of glutamine and ATP through an activated gamma-phospho-Glu-tRNA(Gln).</text>
</comment>
<comment type="catalytic activity">
    <reaction evidence="1">
        <text>L-glutamyl-tRNA(Gln) + L-glutamine + ATP + H2O = L-glutaminyl-tRNA(Gln) + L-glutamate + ADP + phosphate + H(+)</text>
        <dbReference type="Rhea" id="RHEA:17521"/>
        <dbReference type="Rhea" id="RHEA-COMP:9681"/>
        <dbReference type="Rhea" id="RHEA-COMP:9684"/>
        <dbReference type="ChEBI" id="CHEBI:15377"/>
        <dbReference type="ChEBI" id="CHEBI:15378"/>
        <dbReference type="ChEBI" id="CHEBI:29985"/>
        <dbReference type="ChEBI" id="CHEBI:30616"/>
        <dbReference type="ChEBI" id="CHEBI:43474"/>
        <dbReference type="ChEBI" id="CHEBI:58359"/>
        <dbReference type="ChEBI" id="CHEBI:78520"/>
        <dbReference type="ChEBI" id="CHEBI:78521"/>
        <dbReference type="ChEBI" id="CHEBI:456216"/>
        <dbReference type="EC" id="6.3.5.7"/>
    </reaction>
</comment>
<comment type="subunit">
    <text evidence="1">Subunit of the heterotrimeric GatCAB amidotransferase (AdT) complex, composed of A (QRSL1), B (GATB) and C (GATC) subunits.</text>
</comment>
<comment type="subcellular location">
    <subcellularLocation>
        <location evidence="1">Mitochondrion</location>
    </subcellularLocation>
</comment>
<comment type="similarity">
    <text evidence="1">Belongs to the amidase family. GatA subfamily.</text>
</comment>
<protein>
    <recommendedName>
        <fullName evidence="1">Glutamyl-tRNA(Gln) amidotransferase subunit A, mitochondrial</fullName>
        <shortName evidence="1">Glu-AdT subunit A</shortName>
        <ecNumber evidence="1">6.3.5.7</ecNumber>
    </recommendedName>
    <alternativeName>
        <fullName evidence="1">Glutaminyl-tRNA synthase-like protein 1</fullName>
    </alternativeName>
</protein>
<evidence type="ECO:0000255" key="1">
    <source>
        <dbReference type="HAMAP-Rule" id="MF_03150"/>
    </source>
</evidence>
<evidence type="ECO:0000256" key="2">
    <source>
        <dbReference type="SAM" id="MobiDB-lite"/>
    </source>
</evidence>
<organism>
    <name type="scientific">Macaca fascicularis</name>
    <name type="common">Crab-eating macaque</name>
    <name type="synonym">Cynomolgus monkey</name>
    <dbReference type="NCBI Taxonomy" id="9541"/>
    <lineage>
        <taxon>Eukaryota</taxon>
        <taxon>Metazoa</taxon>
        <taxon>Chordata</taxon>
        <taxon>Craniata</taxon>
        <taxon>Vertebrata</taxon>
        <taxon>Euteleostomi</taxon>
        <taxon>Mammalia</taxon>
        <taxon>Eutheria</taxon>
        <taxon>Euarchontoglires</taxon>
        <taxon>Primates</taxon>
        <taxon>Haplorrhini</taxon>
        <taxon>Catarrhini</taxon>
        <taxon>Cercopithecidae</taxon>
        <taxon>Cercopithecinae</taxon>
        <taxon>Macaca</taxon>
    </lineage>
</organism>
<name>GATA_MACFA</name>
<keyword id="KW-0067">ATP-binding</keyword>
<keyword id="KW-0436">Ligase</keyword>
<keyword id="KW-0496">Mitochondrion</keyword>
<keyword id="KW-0547">Nucleotide-binding</keyword>
<keyword id="KW-0648">Protein biosynthesis</keyword>
<keyword id="KW-1185">Reference proteome</keyword>
<dbReference type="EC" id="6.3.5.7" evidence="1"/>
<dbReference type="EMBL" id="AB168163">
    <property type="protein sequence ID" value="BAE00288.1"/>
    <property type="molecule type" value="mRNA"/>
</dbReference>
<dbReference type="EMBL" id="AB168744">
    <property type="protein sequence ID" value="BAE00853.1"/>
    <property type="molecule type" value="mRNA"/>
</dbReference>
<dbReference type="RefSeq" id="NP_001271511.1">
    <property type="nucleotide sequence ID" value="NM_001284582.1"/>
</dbReference>
<dbReference type="SMR" id="Q4R7R9"/>
<dbReference type="STRING" id="9541.ENSMFAP00000019781"/>
<dbReference type="VEuPathDB" id="HostDB:ENSMFAG00000032880"/>
<dbReference type="eggNOG" id="KOG1211">
    <property type="taxonomic scope" value="Eukaryota"/>
</dbReference>
<dbReference type="OMA" id="QPASYCG"/>
<dbReference type="Proteomes" id="UP000233100">
    <property type="component" value="Chromosome 4"/>
</dbReference>
<dbReference type="GO" id="GO:0030956">
    <property type="term" value="C:glutamyl-tRNA(Gln) amidotransferase complex"/>
    <property type="evidence" value="ECO:0007669"/>
    <property type="project" value="UniProtKB-UniRule"/>
</dbReference>
<dbReference type="GO" id="GO:0005739">
    <property type="term" value="C:mitochondrion"/>
    <property type="evidence" value="ECO:0007669"/>
    <property type="project" value="UniProtKB-SubCell"/>
</dbReference>
<dbReference type="GO" id="GO:0005524">
    <property type="term" value="F:ATP binding"/>
    <property type="evidence" value="ECO:0007669"/>
    <property type="project" value="UniProtKB-KW"/>
</dbReference>
<dbReference type="GO" id="GO:0050567">
    <property type="term" value="F:glutaminyl-tRNA synthase (glutamine-hydrolyzing) activity"/>
    <property type="evidence" value="ECO:0007669"/>
    <property type="project" value="UniProtKB-UniRule"/>
</dbReference>
<dbReference type="GO" id="GO:0070681">
    <property type="term" value="P:glutaminyl-tRNAGln biosynthesis via transamidation"/>
    <property type="evidence" value="ECO:0007669"/>
    <property type="project" value="UniProtKB-UniRule"/>
</dbReference>
<dbReference type="GO" id="GO:0032543">
    <property type="term" value="P:mitochondrial translation"/>
    <property type="evidence" value="ECO:0007669"/>
    <property type="project" value="UniProtKB-UniRule"/>
</dbReference>
<dbReference type="FunFam" id="3.90.1300.10:FF:000002">
    <property type="entry name" value="Glutamyl-tRNA(Gln) amidotransferase subunit A, mitochondrial"/>
    <property type="match status" value="1"/>
</dbReference>
<dbReference type="Gene3D" id="3.90.1300.10">
    <property type="entry name" value="Amidase signature (AS) domain"/>
    <property type="match status" value="1"/>
</dbReference>
<dbReference type="HAMAP" id="MF_00120">
    <property type="entry name" value="GatA"/>
    <property type="match status" value="1"/>
</dbReference>
<dbReference type="InterPro" id="IPR000120">
    <property type="entry name" value="Amidase"/>
</dbReference>
<dbReference type="InterPro" id="IPR023631">
    <property type="entry name" value="Amidase_dom"/>
</dbReference>
<dbReference type="InterPro" id="IPR036928">
    <property type="entry name" value="AS_sf"/>
</dbReference>
<dbReference type="InterPro" id="IPR004412">
    <property type="entry name" value="GatA"/>
</dbReference>
<dbReference type="PANTHER" id="PTHR11895:SF7">
    <property type="entry name" value="GLUTAMYL-TRNA(GLN) AMIDOTRANSFERASE SUBUNIT A, MITOCHONDRIAL"/>
    <property type="match status" value="1"/>
</dbReference>
<dbReference type="PANTHER" id="PTHR11895">
    <property type="entry name" value="TRANSAMIDASE"/>
    <property type="match status" value="1"/>
</dbReference>
<dbReference type="Pfam" id="PF01425">
    <property type="entry name" value="Amidase"/>
    <property type="match status" value="1"/>
</dbReference>
<dbReference type="SUPFAM" id="SSF75304">
    <property type="entry name" value="Amidase signature (AS) enzymes"/>
    <property type="match status" value="1"/>
</dbReference>
<reference key="1">
    <citation type="submission" date="2005-06" db="EMBL/GenBank/DDBJ databases">
        <title>DNA sequences of macaque genes expressed in brain or testis and its evolutionary implications.</title>
        <authorList>
            <consortium name="International consortium for macaque cDNA sequencing and analysis"/>
        </authorList>
    </citation>
    <scope>NUCLEOTIDE SEQUENCE [LARGE SCALE MRNA]</scope>
    <source>
        <tissue>Testis</tissue>
    </source>
</reference>
<accession>Q4R7R9</accession>
<feature type="chain" id="PRO_0000316768" description="Glutamyl-tRNA(Gln) amidotransferase subunit A, mitochondrial">
    <location>
        <begin position="1"/>
        <end position="528"/>
    </location>
</feature>
<feature type="region of interest" description="Disordered" evidence="2">
    <location>
        <begin position="147"/>
        <end position="166"/>
    </location>
</feature>
<feature type="active site" description="Charge relay system" evidence="1">
    <location>
        <position position="76"/>
    </location>
</feature>
<feature type="active site" description="Charge relay system" evidence="1">
    <location>
        <position position="171"/>
    </location>
</feature>
<feature type="active site" description="Acyl-ester intermediate" evidence="1">
    <location>
        <position position="195"/>
    </location>
</feature>
<sequence>MLGRTLQEVSAALKQGQITPTELCQKCLSLIKKTKFLNAYITVSEEVALKQAEESEKRYKNGQSLGDLDGIPVAVKDNFSTSGIETTCASNMLKGYIPPYNATVVQKLLDQGALLMGKTNLDEFAMGSGSTDGIFGPVKNPWSYSKQYREKRKQNPHSKNEDSDWLITGGSSGGSAAAVSAFTCYAALGSDTGGSTRNPAAHCGLVGFKPSYGLVSRHGLIPLVNSMDVPGILTRCVDDAAIVLGALAGPDPKDSTTVHDPINKPFMLPSLADVSKLCIGIPKEYLIPELSSEVRSLWSKAADLFESEGAKVLEVSLPHTSYSIVCYHVLCTSEVASNMARFDGLQYGHRCDINVSTEAMYAATRREGFNDVVRGRILSGNFFLLKENYENYFVKAQKVRRLIANDFVNAFNSGVDVLLTPTTLSEAVPYLEFIKEDNRTRSAQDDIFTQAVNMAGLPAVSIPVALSNQGLPIGLQFIGRAFCDQQLLTVAKWFEKQVQFPFIQLQELMDDCSAVLENEKSASVSLKQ</sequence>
<proteinExistence type="evidence at transcript level"/>
<gene>
    <name evidence="1" type="primary">QRSL1</name>
    <name type="ORF">QtsA-10264</name>
    <name type="ORF">QtsA-14543</name>
</gene>